<evidence type="ECO:0000255" key="1">
    <source>
        <dbReference type="HAMAP-Rule" id="MF_01385"/>
    </source>
</evidence>
<protein>
    <recommendedName>
        <fullName evidence="1">Urease accessory protein UreF</fullName>
    </recommendedName>
</protein>
<name>UREF_PSYCK</name>
<proteinExistence type="inferred from homology"/>
<keyword id="KW-0143">Chaperone</keyword>
<keyword id="KW-0963">Cytoplasm</keyword>
<keyword id="KW-0996">Nickel insertion</keyword>
<accession>Q1QCD8</accession>
<dbReference type="EMBL" id="CP000323">
    <property type="protein sequence ID" value="ABE74665.1"/>
    <property type="molecule type" value="Genomic_DNA"/>
</dbReference>
<dbReference type="RefSeq" id="WP_011513226.1">
    <property type="nucleotide sequence ID" value="NC_007969.1"/>
</dbReference>
<dbReference type="SMR" id="Q1QCD8"/>
<dbReference type="STRING" id="335284.Pcryo_0884"/>
<dbReference type="KEGG" id="pcr:Pcryo_0884"/>
<dbReference type="eggNOG" id="COG0830">
    <property type="taxonomic scope" value="Bacteria"/>
</dbReference>
<dbReference type="HOGENOM" id="CLU_049215_2_1_6"/>
<dbReference type="Proteomes" id="UP000002425">
    <property type="component" value="Chromosome"/>
</dbReference>
<dbReference type="GO" id="GO:0005737">
    <property type="term" value="C:cytoplasm"/>
    <property type="evidence" value="ECO:0007669"/>
    <property type="project" value="UniProtKB-SubCell"/>
</dbReference>
<dbReference type="GO" id="GO:0016151">
    <property type="term" value="F:nickel cation binding"/>
    <property type="evidence" value="ECO:0007669"/>
    <property type="project" value="UniProtKB-UniRule"/>
</dbReference>
<dbReference type="Gene3D" id="1.10.4190.10">
    <property type="entry name" value="Urease accessory protein UreF"/>
    <property type="match status" value="1"/>
</dbReference>
<dbReference type="HAMAP" id="MF_01385">
    <property type="entry name" value="UreF"/>
    <property type="match status" value="1"/>
</dbReference>
<dbReference type="InterPro" id="IPR002639">
    <property type="entry name" value="UreF"/>
</dbReference>
<dbReference type="InterPro" id="IPR038277">
    <property type="entry name" value="UreF_sf"/>
</dbReference>
<dbReference type="PANTHER" id="PTHR33620">
    <property type="entry name" value="UREASE ACCESSORY PROTEIN F"/>
    <property type="match status" value="1"/>
</dbReference>
<dbReference type="PANTHER" id="PTHR33620:SF1">
    <property type="entry name" value="UREASE ACCESSORY PROTEIN F"/>
    <property type="match status" value="1"/>
</dbReference>
<dbReference type="Pfam" id="PF01730">
    <property type="entry name" value="UreF"/>
    <property type="match status" value="1"/>
</dbReference>
<dbReference type="PIRSF" id="PIRSF009467">
    <property type="entry name" value="Ureas_acces_UreF"/>
    <property type="match status" value="1"/>
</dbReference>
<feature type="chain" id="PRO_0000344157" description="Urease accessory protein UreF">
    <location>
        <begin position="1"/>
        <end position="235"/>
    </location>
</feature>
<sequence length="235" mass="25829">MRIDDPSNAVSDLALLGLMQLISPALPIGAFAWSQGLESAFELGWVNNEAQLGEWLEGVLGDGLTRCELPVLARLQRCWANNDGDGLAFWNDWLHANRETAELSDEDTRLGQALIRLLNSLELQPQKALGHVELPEEPGYVTVFAWTAHQRQVPVRQALLGFAWGWLENQLAAACKALPLGHTAAQRLNETLRPQLVAAVDKALTLTDEQLGPILPGLALGSAQHETQYSRLFRS</sequence>
<gene>
    <name evidence="1" type="primary">ureF</name>
    <name type="ordered locus">Pcryo_0884</name>
</gene>
<organism>
    <name type="scientific">Psychrobacter cryohalolentis (strain ATCC BAA-1226 / DSM 17306 / VKM B-2378 / K5)</name>
    <dbReference type="NCBI Taxonomy" id="335284"/>
    <lineage>
        <taxon>Bacteria</taxon>
        <taxon>Pseudomonadati</taxon>
        <taxon>Pseudomonadota</taxon>
        <taxon>Gammaproteobacteria</taxon>
        <taxon>Moraxellales</taxon>
        <taxon>Moraxellaceae</taxon>
        <taxon>Psychrobacter</taxon>
    </lineage>
</organism>
<reference key="1">
    <citation type="submission" date="2006-03" db="EMBL/GenBank/DDBJ databases">
        <title>Complete sequence of chromosome of Psychrobacter cryohalolentis K5.</title>
        <authorList>
            <consortium name="US DOE Joint Genome Institute"/>
            <person name="Copeland A."/>
            <person name="Lucas S."/>
            <person name="Lapidus A."/>
            <person name="Barry K."/>
            <person name="Detter J.C."/>
            <person name="Glavina T."/>
            <person name="Hammon N."/>
            <person name="Israni S."/>
            <person name="Dalin E."/>
            <person name="Tice H."/>
            <person name="Pitluck S."/>
            <person name="Brettin T."/>
            <person name="Bruce D."/>
            <person name="Han C."/>
            <person name="Tapia R."/>
            <person name="Sims D.R."/>
            <person name="Gilna P."/>
            <person name="Schmutz J."/>
            <person name="Larimer F."/>
            <person name="Land M."/>
            <person name="Hauser L."/>
            <person name="Kyrpides N."/>
            <person name="Kim E."/>
            <person name="Richardson P."/>
        </authorList>
    </citation>
    <scope>NUCLEOTIDE SEQUENCE [LARGE SCALE GENOMIC DNA]</scope>
    <source>
        <strain>ATCC BAA-1226 / DSM 17306 / VKM B-2378 / K5</strain>
    </source>
</reference>
<comment type="function">
    <text evidence="1">Required for maturation of urease via the functional incorporation of the urease nickel metallocenter.</text>
</comment>
<comment type="subunit">
    <text evidence="1">UreD, UreF and UreG form a complex that acts as a GTP-hydrolysis-dependent molecular chaperone, activating the urease apoprotein by helping to assemble the nickel containing metallocenter of UreC. The UreE protein probably delivers the nickel.</text>
</comment>
<comment type="subcellular location">
    <subcellularLocation>
        <location evidence="1">Cytoplasm</location>
    </subcellularLocation>
</comment>
<comment type="similarity">
    <text evidence="1">Belongs to the UreF family.</text>
</comment>